<evidence type="ECO:0000255" key="1"/>
<evidence type="ECO:0000256" key="2">
    <source>
        <dbReference type="SAM" id="MobiDB-lite"/>
    </source>
</evidence>
<evidence type="ECO:0000305" key="3"/>
<feature type="chain" id="PRO_0000269559" description="Solute carrier family 35 member G3">
    <location>
        <begin position="1"/>
        <end position="340"/>
    </location>
</feature>
<feature type="transmembrane region" description="Helical" evidence="1">
    <location>
        <begin position="39"/>
        <end position="59"/>
    </location>
</feature>
<feature type="transmembrane region" description="Helical" evidence="1">
    <location>
        <begin position="69"/>
        <end position="89"/>
    </location>
</feature>
<feature type="transmembrane region" description="Helical" evidence="1">
    <location>
        <begin position="107"/>
        <end position="127"/>
    </location>
</feature>
<feature type="transmembrane region" description="Helical" evidence="1">
    <location>
        <begin position="160"/>
        <end position="180"/>
    </location>
</feature>
<feature type="transmembrane region" description="Helical" evidence="1">
    <location>
        <begin position="189"/>
        <end position="209"/>
    </location>
</feature>
<feature type="transmembrane region" description="Helical" evidence="1">
    <location>
        <begin position="223"/>
        <end position="243"/>
    </location>
</feature>
<feature type="transmembrane region" description="Helical" evidence="1">
    <location>
        <begin position="257"/>
        <end position="277"/>
    </location>
</feature>
<feature type="transmembrane region" description="Helical" evidence="1">
    <location>
        <begin position="283"/>
        <end position="303"/>
    </location>
</feature>
<feature type="transmembrane region" description="Helical" evidence="1">
    <location>
        <begin position="307"/>
        <end position="327"/>
    </location>
</feature>
<feature type="domain" description="EamA 1">
    <location>
        <begin position="51"/>
        <end position="176"/>
    </location>
</feature>
<feature type="domain" description="EamA 2">
    <location>
        <begin position="274"/>
        <end position="327"/>
    </location>
</feature>
<feature type="region of interest" description="Disordered" evidence="2">
    <location>
        <begin position="11"/>
        <end position="33"/>
    </location>
</feature>
<protein>
    <recommendedName>
        <fullName>Solute carrier family 35 member G3</fullName>
    </recommendedName>
    <alternativeName>
        <fullName>Acyl-malonyl-condensing enzyme 1</fullName>
    </alternativeName>
</protein>
<gene>
    <name type="primary">Slc35g3</name>
    <name type="synonym">Amac1</name>
</gene>
<dbReference type="EMBL" id="AF016712">
    <property type="protein sequence ID" value="AAD11967.1"/>
    <property type="status" value="ALT_SEQ"/>
    <property type="molecule type" value="mRNA"/>
</dbReference>
<dbReference type="EMBL" id="AF111715">
    <property type="protein sequence ID" value="AAD26636.1"/>
    <property type="status" value="ALT_SEQ"/>
    <property type="molecule type" value="Genomic_DNA"/>
</dbReference>
<dbReference type="EMBL" id="AL603707">
    <property type="protein sequence ID" value="CAI51954.1"/>
    <property type="status" value="ALT_SEQ"/>
    <property type="molecule type" value="Genomic_DNA"/>
</dbReference>
<dbReference type="SMR" id="Q5F297"/>
<dbReference type="STRING" id="10090.ENSMUSP00000156297"/>
<dbReference type="TCDB" id="2.A.7.28.3">
    <property type="family name" value="the drug/metabolite transporter (dmt) superfamily"/>
</dbReference>
<dbReference type="GlyGen" id="Q5F297">
    <property type="glycosylation" value="2 sites"/>
</dbReference>
<dbReference type="PhosphoSitePlus" id="Q5F297"/>
<dbReference type="PaxDb" id="10090-ENSMUSP00000099646"/>
<dbReference type="Ensembl" id="ENSMUST00000102586.5">
    <property type="protein sequence ID" value="ENSMUSP00000099646.5"/>
    <property type="gene ID" value="ENSMUSG00000018776.11"/>
</dbReference>
<dbReference type="AGR" id="MGI:1927128"/>
<dbReference type="MGI" id="MGI:1927128">
    <property type="gene designation" value="Slc35g3"/>
</dbReference>
<dbReference type="VEuPathDB" id="HostDB:ENSMUSG00000018776"/>
<dbReference type="eggNOG" id="ENOG502RCFC">
    <property type="taxonomic scope" value="Eukaryota"/>
</dbReference>
<dbReference type="GeneTree" id="ENSGT00940000153249"/>
<dbReference type="InParanoid" id="Q5F297"/>
<dbReference type="OMA" id="LPWHQRC"/>
<dbReference type="OrthoDB" id="306876at2759"/>
<dbReference type="PRO" id="PR:Q5F297"/>
<dbReference type="Proteomes" id="UP000000589">
    <property type="component" value="Chromosome 11"/>
</dbReference>
<dbReference type="RNAct" id="Q5F297">
    <property type="molecule type" value="protein"/>
</dbReference>
<dbReference type="Bgee" id="ENSMUSG00000018776">
    <property type="expression patterns" value="Expressed in spermatid and 9 other cell types or tissues"/>
</dbReference>
<dbReference type="ExpressionAtlas" id="Q5F297">
    <property type="expression patterns" value="baseline and differential"/>
</dbReference>
<dbReference type="GO" id="GO:0016020">
    <property type="term" value="C:membrane"/>
    <property type="evidence" value="ECO:0007669"/>
    <property type="project" value="UniProtKB-SubCell"/>
</dbReference>
<dbReference type="InterPro" id="IPR000620">
    <property type="entry name" value="EamA_dom"/>
</dbReference>
<dbReference type="PANTHER" id="PTHR22911">
    <property type="entry name" value="ACYL-MALONYL CONDENSING ENZYME-RELATED"/>
    <property type="match status" value="1"/>
</dbReference>
<dbReference type="PANTHER" id="PTHR22911:SF32">
    <property type="entry name" value="SOLUTE CARRIER FAMILY 35 MEMBER G5-RELATED"/>
    <property type="match status" value="1"/>
</dbReference>
<dbReference type="Pfam" id="PF00892">
    <property type="entry name" value="EamA"/>
    <property type="match status" value="2"/>
</dbReference>
<dbReference type="SUPFAM" id="SSF103481">
    <property type="entry name" value="Multidrug resistance efflux transporter EmrE"/>
    <property type="match status" value="2"/>
</dbReference>
<proteinExistence type="evidence at transcript level"/>
<accession>Q5F297</accession>
<accession>O35281</accession>
<sequence>MAASHPYFNLPDFTQPSPPSTPASLPSKHHHRCGPSNATKGLFVALLGGGLSAGFVGPFSRMAYQTSQLPSLELLIFRCLFHLPIALLLKFRGDPLLGPPDVRVRAFLHAILNVLSIGCAYSAVQVVPAGNAVTVRKGSSTVCSALLALCLESQGLSGYAWCGLFGSTLGLIIIVGPGLGTLQEGTTGLYTALGYVLAFLGGLALSLGLQIYRSLHFPSCLPTVAFLFGLVGLMVSVPGLFVLQTPVLPQDTLSWSCVVAVGLLALVSFVCVSYAVTKAHPALVCAVLHSEVVVALMLQYYVLYETVAPSDIMGAGVVLGSIAIITAQNLSCDKEGQTEE</sequence>
<comment type="subcellular location">
    <subcellularLocation>
        <location evidence="3">Membrane</location>
        <topology evidence="3">Multi-pass membrane protein</topology>
    </subcellularLocation>
</comment>
<comment type="similarity">
    <text evidence="3">Belongs to the SLC35G solute transporter family.</text>
</comment>
<comment type="sequence caution" evidence="3">
    <conflict type="frameshift">
        <sequence resource="EMBL-CDS" id="AAD11967"/>
    </conflict>
</comment>
<comment type="sequence caution" evidence="3">
    <conflict type="erroneous gene model prediction">
        <sequence resource="EMBL-CDS" id="AAD26636"/>
    </conflict>
</comment>
<comment type="sequence caution" evidence="3">
    <conflict type="frameshift">
        <sequence resource="EMBL-CDS" id="AAD26636"/>
    </conflict>
</comment>
<comment type="sequence caution" evidence="3">
    <conflict type="erroneous gene model prediction">
        <sequence resource="EMBL-CDS" id="CAI51954"/>
    </conflict>
</comment>
<keyword id="KW-0472">Membrane</keyword>
<keyword id="KW-1185">Reference proteome</keyword>
<keyword id="KW-0677">Repeat</keyword>
<keyword id="KW-0812">Transmembrane</keyword>
<keyword id="KW-1133">Transmembrane helix</keyword>
<organism>
    <name type="scientific">Mus musculus</name>
    <name type="common">Mouse</name>
    <dbReference type="NCBI Taxonomy" id="10090"/>
    <lineage>
        <taxon>Eukaryota</taxon>
        <taxon>Metazoa</taxon>
        <taxon>Chordata</taxon>
        <taxon>Craniata</taxon>
        <taxon>Vertebrata</taxon>
        <taxon>Euteleostomi</taxon>
        <taxon>Mammalia</taxon>
        <taxon>Eutheria</taxon>
        <taxon>Euarchontoglires</taxon>
        <taxon>Glires</taxon>
        <taxon>Rodentia</taxon>
        <taxon>Myomorpha</taxon>
        <taxon>Muroidea</taxon>
        <taxon>Muridae</taxon>
        <taxon>Murinae</taxon>
        <taxon>Mus</taxon>
        <taxon>Mus</taxon>
    </lineage>
</organism>
<reference key="1">
    <citation type="journal article" date="1997" name="Biochem. Soc. Trans.">
        <title>RT-PCR of fatty acid elongases.</title>
        <authorList>
            <person name="Kells A.P."/>
            <person name="Maynard P.V."/>
        </authorList>
    </citation>
    <scope>NUCLEOTIDE SEQUENCE [GENOMIC DNA / MRNA]</scope>
</reference>
<reference key="2">
    <citation type="journal article" date="2009" name="PLoS Biol.">
        <title>Lineage-specific biology revealed by a finished genome assembly of the mouse.</title>
        <authorList>
            <person name="Church D.M."/>
            <person name="Goodstadt L."/>
            <person name="Hillier L.W."/>
            <person name="Zody M.C."/>
            <person name="Goldstein S."/>
            <person name="She X."/>
            <person name="Bult C.J."/>
            <person name="Agarwala R."/>
            <person name="Cherry J.L."/>
            <person name="DiCuccio M."/>
            <person name="Hlavina W."/>
            <person name="Kapustin Y."/>
            <person name="Meric P."/>
            <person name="Maglott D."/>
            <person name="Birtle Z."/>
            <person name="Marques A.C."/>
            <person name="Graves T."/>
            <person name="Zhou S."/>
            <person name="Teague B."/>
            <person name="Potamousis K."/>
            <person name="Churas C."/>
            <person name="Place M."/>
            <person name="Herschleb J."/>
            <person name="Runnheim R."/>
            <person name="Forrest D."/>
            <person name="Amos-Landgraf J."/>
            <person name="Schwartz D.C."/>
            <person name="Cheng Z."/>
            <person name="Lindblad-Toh K."/>
            <person name="Eichler E.E."/>
            <person name="Ponting C.P."/>
        </authorList>
    </citation>
    <scope>NUCLEOTIDE SEQUENCE [LARGE SCALE GENOMIC DNA]</scope>
    <source>
        <strain>C57BL/6J</strain>
    </source>
</reference>
<name>S35G3_MOUSE</name>